<gene>
    <name evidence="1" type="primary">acpP</name>
    <name type="synonym">acp</name>
    <name type="ordered locus">spr0378</name>
</gene>
<reference key="1">
    <citation type="journal article" date="2000" name="Nature">
        <title>A triclosan-resistant bacterial enzyme.</title>
        <authorList>
            <person name="Heath R.J."/>
            <person name="Rock C.O."/>
        </authorList>
    </citation>
    <scope>NUCLEOTIDE SEQUENCE [GENOMIC DNA]</scope>
</reference>
<reference key="2">
    <citation type="journal article" date="2001" name="J. Bacteriol.">
        <title>Genome of the bacterium Streptococcus pneumoniae strain R6.</title>
        <authorList>
            <person name="Hoskins J."/>
            <person name="Alborn W.E. Jr."/>
            <person name="Arnold J."/>
            <person name="Blaszczak L.C."/>
            <person name="Burgett S."/>
            <person name="DeHoff B.S."/>
            <person name="Estrem S.T."/>
            <person name="Fritz L."/>
            <person name="Fu D.-J."/>
            <person name="Fuller W."/>
            <person name="Geringer C."/>
            <person name="Gilmour R."/>
            <person name="Glass J.S."/>
            <person name="Khoja H."/>
            <person name="Kraft A.R."/>
            <person name="Lagace R.E."/>
            <person name="LeBlanc D.J."/>
            <person name="Lee L.N."/>
            <person name="Lefkowitz E.J."/>
            <person name="Lu J."/>
            <person name="Matsushima P."/>
            <person name="McAhren S.M."/>
            <person name="McHenney M."/>
            <person name="McLeaster K."/>
            <person name="Mundy C.W."/>
            <person name="Nicas T.I."/>
            <person name="Norris F.H."/>
            <person name="O'Gara M."/>
            <person name="Peery R.B."/>
            <person name="Robertson G.T."/>
            <person name="Rockey P."/>
            <person name="Sun P.-M."/>
            <person name="Winkler M.E."/>
            <person name="Yang Y."/>
            <person name="Young-Bellido M."/>
            <person name="Zhao G."/>
            <person name="Zook C.A."/>
            <person name="Baltz R.H."/>
            <person name="Jaskunas S.R."/>
            <person name="Rosteck P.R. Jr."/>
            <person name="Skatrud P.L."/>
            <person name="Glass J.I."/>
        </authorList>
    </citation>
    <scope>NUCLEOTIDE SEQUENCE [LARGE SCALE GENOMIC DNA]</scope>
    <source>
        <strain>ATCC BAA-255 / R6</strain>
    </source>
</reference>
<evidence type="ECO:0000255" key="1">
    <source>
        <dbReference type="HAMAP-Rule" id="MF_01217"/>
    </source>
</evidence>
<evidence type="ECO:0000255" key="2">
    <source>
        <dbReference type="PROSITE-ProRule" id="PRU00258"/>
    </source>
</evidence>
<name>ACP_STRR6</name>
<keyword id="KW-0963">Cytoplasm</keyword>
<keyword id="KW-0275">Fatty acid biosynthesis</keyword>
<keyword id="KW-0276">Fatty acid metabolism</keyword>
<keyword id="KW-0444">Lipid biosynthesis</keyword>
<keyword id="KW-0443">Lipid metabolism</keyword>
<keyword id="KW-0596">Phosphopantetheine</keyword>
<keyword id="KW-0597">Phosphoprotein</keyword>
<keyword id="KW-1185">Reference proteome</keyword>
<sequence>MAVFEKVQEIIVEELGKDASEVTLESTFDDLDADSLDLFQVISEIEDAFDIQIEAENDLKTVGDLVAYVEEQAK</sequence>
<proteinExistence type="inferred from homology"/>
<comment type="function">
    <text evidence="1">Carrier of the growing fatty acid chain in fatty acid biosynthesis.</text>
</comment>
<comment type="pathway">
    <text evidence="1">Lipid metabolism; fatty acid biosynthesis.</text>
</comment>
<comment type="subcellular location">
    <subcellularLocation>
        <location evidence="1">Cytoplasm</location>
    </subcellularLocation>
</comment>
<comment type="PTM">
    <text evidence="1">4'-phosphopantetheine is transferred from CoA to a specific serine of apo-ACP by AcpS. This modification is essential for activity because fatty acids are bound in thioester linkage to the sulfhydryl of the prosthetic group.</text>
</comment>
<comment type="similarity">
    <text evidence="1">Belongs to the acyl carrier protein (ACP) family.</text>
</comment>
<dbReference type="EMBL" id="AF197933">
    <property type="protein sequence ID" value="AAF98272.1"/>
    <property type="molecule type" value="Genomic_DNA"/>
</dbReference>
<dbReference type="EMBL" id="AE007317">
    <property type="protein sequence ID" value="AAK99182.1"/>
    <property type="molecule type" value="Genomic_DNA"/>
</dbReference>
<dbReference type="PIR" id="B97919">
    <property type="entry name" value="B97919"/>
</dbReference>
<dbReference type="RefSeq" id="NP_357972.1">
    <property type="nucleotide sequence ID" value="NC_003098.1"/>
</dbReference>
<dbReference type="RefSeq" id="WP_000257841.1">
    <property type="nucleotide sequence ID" value="NC_003098.1"/>
</dbReference>
<dbReference type="SMR" id="P0A2W1"/>
<dbReference type="STRING" id="171101.spr0378"/>
<dbReference type="KEGG" id="spr:spr0378"/>
<dbReference type="PATRIC" id="fig|171101.6.peg.419"/>
<dbReference type="eggNOG" id="COG0236">
    <property type="taxonomic scope" value="Bacteria"/>
</dbReference>
<dbReference type="HOGENOM" id="CLU_108696_5_0_9"/>
<dbReference type="UniPathway" id="UPA00094"/>
<dbReference type="Proteomes" id="UP000000586">
    <property type="component" value="Chromosome"/>
</dbReference>
<dbReference type="GO" id="GO:0005829">
    <property type="term" value="C:cytosol"/>
    <property type="evidence" value="ECO:0000318"/>
    <property type="project" value="GO_Central"/>
</dbReference>
<dbReference type="GO" id="GO:0016020">
    <property type="term" value="C:membrane"/>
    <property type="evidence" value="ECO:0007669"/>
    <property type="project" value="GOC"/>
</dbReference>
<dbReference type="GO" id="GO:0000035">
    <property type="term" value="F:acyl binding"/>
    <property type="evidence" value="ECO:0000318"/>
    <property type="project" value="GO_Central"/>
</dbReference>
<dbReference type="GO" id="GO:0000036">
    <property type="term" value="F:acyl carrier activity"/>
    <property type="evidence" value="ECO:0000318"/>
    <property type="project" value="GO_Central"/>
</dbReference>
<dbReference type="GO" id="GO:0009245">
    <property type="term" value="P:lipid A biosynthetic process"/>
    <property type="evidence" value="ECO:0000318"/>
    <property type="project" value="GO_Central"/>
</dbReference>
<dbReference type="Gene3D" id="1.10.1200.10">
    <property type="entry name" value="ACP-like"/>
    <property type="match status" value="1"/>
</dbReference>
<dbReference type="HAMAP" id="MF_01217">
    <property type="entry name" value="Acyl_carrier"/>
    <property type="match status" value="1"/>
</dbReference>
<dbReference type="InterPro" id="IPR003231">
    <property type="entry name" value="ACP"/>
</dbReference>
<dbReference type="InterPro" id="IPR036736">
    <property type="entry name" value="ACP-like_sf"/>
</dbReference>
<dbReference type="InterPro" id="IPR009081">
    <property type="entry name" value="PP-bd_ACP"/>
</dbReference>
<dbReference type="NCBIfam" id="NF002148">
    <property type="entry name" value="PRK00982.1-2"/>
    <property type="match status" value="1"/>
</dbReference>
<dbReference type="NCBIfam" id="NF002150">
    <property type="entry name" value="PRK00982.1-4"/>
    <property type="match status" value="1"/>
</dbReference>
<dbReference type="PANTHER" id="PTHR20863">
    <property type="entry name" value="ACYL CARRIER PROTEIN"/>
    <property type="match status" value="1"/>
</dbReference>
<dbReference type="PANTHER" id="PTHR20863:SF62">
    <property type="entry name" value="ACYL CARRIER PROTEIN"/>
    <property type="match status" value="1"/>
</dbReference>
<dbReference type="Pfam" id="PF00550">
    <property type="entry name" value="PP-binding"/>
    <property type="match status" value="1"/>
</dbReference>
<dbReference type="SUPFAM" id="SSF47336">
    <property type="entry name" value="ACP-like"/>
    <property type="match status" value="1"/>
</dbReference>
<dbReference type="PROSITE" id="PS50075">
    <property type="entry name" value="CARRIER"/>
    <property type="match status" value="1"/>
</dbReference>
<accession>P0A2W1</accession>
<accession>Q9FBC6</accession>
<organism>
    <name type="scientific">Streptococcus pneumoniae (strain ATCC BAA-255 / R6)</name>
    <dbReference type="NCBI Taxonomy" id="171101"/>
    <lineage>
        <taxon>Bacteria</taxon>
        <taxon>Bacillati</taxon>
        <taxon>Bacillota</taxon>
        <taxon>Bacilli</taxon>
        <taxon>Lactobacillales</taxon>
        <taxon>Streptococcaceae</taxon>
        <taxon>Streptococcus</taxon>
    </lineage>
</organism>
<protein>
    <recommendedName>
        <fullName evidence="1">Acyl carrier protein</fullName>
        <shortName evidence="1">ACP</shortName>
    </recommendedName>
</protein>
<feature type="chain" id="PRO_0000180200" description="Acyl carrier protein">
    <location>
        <begin position="1"/>
        <end position="74"/>
    </location>
</feature>
<feature type="domain" description="Carrier" evidence="2">
    <location>
        <begin position="1"/>
        <end position="73"/>
    </location>
</feature>
<feature type="modified residue" description="O-(pantetheine 4'-phosphoryl)serine" evidence="2">
    <location>
        <position position="35"/>
    </location>
</feature>